<dbReference type="EC" id="2.7.7.4" evidence="1"/>
<dbReference type="EMBL" id="CP001071">
    <property type="protein sequence ID" value="ACD05123.1"/>
    <property type="molecule type" value="Genomic_DNA"/>
</dbReference>
<dbReference type="RefSeq" id="WP_012420338.1">
    <property type="nucleotide sequence ID" value="NC_010655.1"/>
</dbReference>
<dbReference type="SMR" id="B2URN8"/>
<dbReference type="STRING" id="349741.Amuc_1299"/>
<dbReference type="PaxDb" id="349741-Amuc_1299"/>
<dbReference type="KEGG" id="amu:Amuc_1299"/>
<dbReference type="eggNOG" id="COG0175">
    <property type="taxonomic scope" value="Bacteria"/>
</dbReference>
<dbReference type="HOGENOM" id="CLU_043026_0_0_0"/>
<dbReference type="OrthoDB" id="9772604at2"/>
<dbReference type="BioCyc" id="AMUC349741:G1GBX-1387-MONOMER"/>
<dbReference type="UniPathway" id="UPA00140">
    <property type="reaction ID" value="UER00204"/>
</dbReference>
<dbReference type="Proteomes" id="UP000001031">
    <property type="component" value="Chromosome"/>
</dbReference>
<dbReference type="GO" id="GO:0005524">
    <property type="term" value="F:ATP binding"/>
    <property type="evidence" value="ECO:0007669"/>
    <property type="project" value="UniProtKB-KW"/>
</dbReference>
<dbReference type="GO" id="GO:0004781">
    <property type="term" value="F:sulfate adenylyltransferase (ATP) activity"/>
    <property type="evidence" value="ECO:0007669"/>
    <property type="project" value="UniProtKB-UniRule"/>
</dbReference>
<dbReference type="GO" id="GO:0070814">
    <property type="term" value="P:hydrogen sulfide biosynthetic process"/>
    <property type="evidence" value="ECO:0007669"/>
    <property type="project" value="UniProtKB-UniRule"/>
</dbReference>
<dbReference type="GO" id="GO:0000103">
    <property type="term" value="P:sulfate assimilation"/>
    <property type="evidence" value="ECO:0007669"/>
    <property type="project" value="UniProtKB-UniRule"/>
</dbReference>
<dbReference type="FunFam" id="3.40.50.620:FF:000002">
    <property type="entry name" value="Sulfate adenylyltransferase subunit 2"/>
    <property type="match status" value="1"/>
</dbReference>
<dbReference type="Gene3D" id="3.40.50.620">
    <property type="entry name" value="HUPs"/>
    <property type="match status" value="1"/>
</dbReference>
<dbReference type="HAMAP" id="MF_00064">
    <property type="entry name" value="Sulf_adenylyltr_sub2"/>
    <property type="match status" value="1"/>
</dbReference>
<dbReference type="InterPro" id="IPR002500">
    <property type="entry name" value="PAPS_reduct_dom"/>
</dbReference>
<dbReference type="InterPro" id="IPR014729">
    <property type="entry name" value="Rossmann-like_a/b/a_fold"/>
</dbReference>
<dbReference type="InterPro" id="IPR011784">
    <property type="entry name" value="SO4_adenylTrfase_ssu"/>
</dbReference>
<dbReference type="InterPro" id="IPR050128">
    <property type="entry name" value="Sulfate_adenylyltrnsfr_sub2"/>
</dbReference>
<dbReference type="NCBIfam" id="TIGR02039">
    <property type="entry name" value="CysD"/>
    <property type="match status" value="1"/>
</dbReference>
<dbReference type="NCBIfam" id="NF003587">
    <property type="entry name" value="PRK05253.1"/>
    <property type="match status" value="1"/>
</dbReference>
<dbReference type="NCBIfam" id="NF009214">
    <property type="entry name" value="PRK12563.1"/>
    <property type="match status" value="1"/>
</dbReference>
<dbReference type="PANTHER" id="PTHR43196">
    <property type="entry name" value="SULFATE ADENYLYLTRANSFERASE SUBUNIT 2"/>
    <property type="match status" value="1"/>
</dbReference>
<dbReference type="PANTHER" id="PTHR43196:SF1">
    <property type="entry name" value="SULFATE ADENYLYLTRANSFERASE SUBUNIT 2"/>
    <property type="match status" value="1"/>
</dbReference>
<dbReference type="Pfam" id="PF01507">
    <property type="entry name" value="PAPS_reduct"/>
    <property type="match status" value="1"/>
</dbReference>
<dbReference type="PIRSF" id="PIRSF002936">
    <property type="entry name" value="CysDAde_trans"/>
    <property type="match status" value="1"/>
</dbReference>
<dbReference type="SUPFAM" id="SSF52402">
    <property type="entry name" value="Adenine nucleotide alpha hydrolases-like"/>
    <property type="match status" value="1"/>
</dbReference>
<protein>
    <recommendedName>
        <fullName evidence="1">Sulfate adenylyltransferase subunit 2</fullName>
        <ecNumber evidence="1">2.7.7.4</ecNumber>
    </recommendedName>
    <alternativeName>
        <fullName evidence="1">ATP-sulfurylase small subunit</fullName>
    </alternativeName>
    <alternativeName>
        <fullName evidence="1">Sulfate adenylate transferase</fullName>
        <shortName evidence="1">SAT</shortName>
    </alternativeName>
</protein>
<keyword id="KW-0067">ATP-binding</keyword>
<keyword id="KW-0547">Nucleotide-binding</keyword>
<keyword id="KW-0548">Nucleotidyltransferase</keyword>
<keyword id="KW-1185">Reference proteome</keyword>
<keyword id="KW-0808">Transferase</keyword>
<comment type="function">
    <text evidence="1">With CysN forms the ATP sulfurylase (ATPS) that catalyzes the adenylation of sulfate producing adenosine 5'-phosphosulfate (APS) and diphosphate, the first enzymatic step in sulfur assimilation pathway. APS synthesis involves the formation of a high-energy phosphoric-sulfuric acid anhydride bond driven by GTP hydrolysis by CysN coupled to ATP hydrolysis by CysD.</text>
</comment>
<comment type="catalytic activity">
    <reaction evidence="1">
        <text>sulfate + ATP + H(+) = adenosine 5'-phosphosulfate + diphosphate</text>
        <dbReference type="Rhea" id="RHEA:18133"/>
        <dbReference type="ChEBI" id="CHEBI:15378"/>
        <dbReference type="ChEBI" id="CHEBI:16189"/>
        <dbReference type="ChEBI" id="CHEBI:30616"/>
        <dbReference type="ChEBI" id="CHEBI:33019"/>
        <dbReference type="ChEBI" id="CHEBI:58243"/>
        <dbReference type="EC" id="2.7.7.4"/>
    </reaction>
</comment>
<comment type="pathway">
    <text evidence="1">Sulfur metabolism; hydrogen sulfide biosynthesis; sulfite from sulfate: step 1/3.</text>
</comment>
<comment type="subunit">
    <text evidence="1">Heterodimer composed of CysD, the smaller subunit, and CysN.</text>
</comment>
<comment type="similarity">
    <text evidence="1">Belongs to the PAPS reductase family. CysD subfamily.</text>
</comment>
<evidence type="ECO:0000255" key="1">
    <source>
        <dbReference type="HAMAP-Rule" id="MF_00064"/>
    </source>
</evidence>
<accession>B2URN8</accession>
<sequence>MNSIYRLSQLKQLEAESIHIFRDAISQFENPVLLYSIGKDSSVLVHLAKKAFYPGRLPFKLLHIDSTFKFREMIEFRDRFVQENDLDLIVHSNQEGISAGVNPFTYGSRKYTDIMKTQALIQALTAGKYDAVFGGARRDEEKSRAKERIFSFRDKFNQWDPKNQRPELWNIYNGRINPGESVRIFPLSNWTELDIWQYIRLEKIQVVDLYFARPRPIVERDGSLIMADDDRLPLKPGETPQMRTVRFRTLGCYPLTGAIESTARTVEEIVAEMLETRLSERSSRIIDHDGDASMEQKKREGYF</sequence>
<gene>
    <name evidence="1" type="primary">cysD</name>
    <name type="ordered locus">Amuc_1299</name>
</gene>
<name>CYSD_AKKM8</name>
<reference key="1">
    <citation type="journal article" date="2011" name="PLoS ONE">
        <title>The genome of Akkermansia muciniphila, a dedicated intestinal mucin degrader, and its use in exploring intestinal metagenomes.</title>
        <authorList>
            <person name="van Passel M.W."/>
            <person name="Kant R."/>
            <person name="Zoetendal E.G."/>
            <person name="Plugge C.M."/>
            <person name="Derrien M."/>
            <person name="Malfatti S.A."/>
            <person name="Chain P.S."/>
            <person name="Woyke T."/>
            <person name="Palva A."/>
            <person name="de Vos W.M."/>
            <person name="Smidt H."/>
        </authorList>
    </citation>
    <scope>NUCLEOTIDE SEQUENCE [LARGE SCALE GENOMIC DNA]</scope>
    <source>
        <strain>ATCC BAA-835 / DSM 22959 / JCM 33894 / BCRC 81048 / CCUG 64013 / CIP 107961 / Muc</strain>
    </source>
</reference>
<feature type="chain" id="PRO_1000116955" description="Sulfate adenylyltransferase subunit 2">
    <location>
        <begin position="1"/>
        <end position="303"/>
    </location>
</feature>
<organism>
    <name type="scientific">Akkermansia muciniphila (strain ATCC BAA-835 / DSM 22959 / JCM 33894 / BCRC 81048 / CCUG 64013 / CIP 107961 / Muc)</name>
    <dbReference type="NCBI Taxonomy" id="349741"/>
    <lineage>
        <taxon>Bacteria</taxon>
        <taxon>Pseudomonadati</taxon>
        <taxon>Verrucomicrobiota</taxon>
        <taxon>Verrucomicrobiia</taxon>
        <taxon>Verrucomicrobiales</taxon>
        <taxon>Akkermansiaceae</taxon>
        <taxon>Akkermansia</taxon>
    </lineage>
</organism>
<proteinExistence type="inferred from homology"/>